<evidence type="ECO:0000255" key="1">
    <source>
        <dbReference type="HAMAP-Rule" id="MF_00294"/>
    </source>
</evidence>
<gene>
    <name evidence="1" type="primary">rpmG2</name>
    <name type="ordered locus">MAG2010</name>
</gene>
<sequence length="50" mass="5856">MPRDGFTLFCTDCKMENYISKKNKKNTPEKVELKKFCAKCNASTLHKEKK</sequence>
<organism>
    <name type="scientific">Mycoplasmopsis agalactiae (strain NCTC 10123 / CIP 59.7 / PG2)</name>
    <name type="common">Mycoplasma agalactiae</name>
    <dbReference type="NCBI Taxonomy" id="347257"/>
    <lineage>
        <taxon>Bacteria</taxon>
        <taxon>Bacillati</taxon>
        <taxon>Mycoplasmatota</taxon>
        <taxon>Mycoplasmoidales</taxon>
        <taxon>Metamycoplasmataceae</taxon>
        <taxon>Mycoplasmopsis</taxon>
    </lineage>
</organism>
<protein>
    <recommendedName>
        <fullName evidence="1">Large ribosomal subunit protein bL33B</fullName>
    </recommendedName>
    <alternativeName>
        <fullName evidence="1">50S ribosomal protein L33 2</fullName>
    </alternativeName>
</protein>
<name>RL332_MYCAP</name>
<keyword id="KW-1185">Reference proteome</keyword>
<keyword id="KW-0687">Ribonucleoprotein</keyword>
<keyword id="KW-0689">Ribosomal protein</keyword>
<proteinExistence type="inferred from homology"/>
<comment type="similarity">
    <text evidence="1">Belongs to the bacterial ribosomal protein bL33 family.</text>
</comment>
<feature type="chain" id="PRO_0000356570" description="Large ribosomal subunit protein bL33B">
    <location>
        <begin position="1"/>
        <end position="50"/>
    </location>
</feature>
<accession>A5IXZ0</accession>
<reference key="1">
    <citation type="journal article" date="2007" name="PLoS Genet.">
        <title>Being pathogenic, plastic, and sexual while living with a nearly minimal bacterial genome.</title>
        <authorList>
            <person name="Sirand-Pugnet P."/>
            <person name="Lartigue C."/>
            <person name="Marenda M."/>
            <person name="Jacob D."/>
            <person name="Barre A."/>
            <person name="Barbe V."/>
            <person name="Schenowitz C."/>
            <person name="Mangenot S."/>
            <person name="Couloux A."/>
            <person name="Segurens B."/>
            <person name="de Daruvar A."/>
            <person name="Blanchard A."/>
            <person name="Citti C."/>
        </authorList>
    </citation>
    <scope>NUCLEOTIDE SEQUENCE [LARGE SCALE GENOMIC DNA]</scope>
    <source>
        <strain>NCTC 10123 / CIP 59.7 / PG2</strain>
    </source>
</reference>
<dbReference type="EMBL" id="CU179680">
    <property type="protein sequence ID" value="CAL58899.1"/>
    <property type="molecule type" value="Genomic_DNA"/>
</dbReference>
<dbReference type="RefSeq" id="WP_011949380.1">
    <property type="nucleotide sequence ID" value="NC_009497.1"/>
</dbReference>
<dbReference type="SMR" id="A5IXZ0"/>
<dbReference type="STRING" id="347257.MAG2010"/>
<dbReference type="GeneID" id="93357959"/>
<dbReference type="KEGG" id="maa:MAG2010"/>
<dbReference type="HOGENOM" id="CLU_190949_0_2_14"/>
<dbReference type="Proteomes" id="UP000007065">
    <property type="component" value="Chromosome"/>
</dbReference>
<dbReference type="GO" id="GO:0005737">
    <property type="term" value="C:cytoplasm"/>
    <property type="evidence" value="ECO:0007669"/>
    <property type="project" value="UniProtKB-ARBA"/>
</dbReference>
<dbReference type="GO" id="GO:1990904">
    <property type="term" value="C:ribonucleoprotein complex"/>
    <property type="evidence" value="ECO:0007669"/>
    <property type="project" value="UniProtKB-KW"/>
</dbReference>
<dbReference type="GO" id="GO:0005840">
    <property type="term" value="C:ribosome"/>
    <property type="evidence" value="ECO:0007669"/>
    <property type="project" value="UniProtKB-KW"/>
</dbReference>
<dbReference type="GO" id="GO:0003735">
    <property type="term" value="F:structural constituent of ribosome"/>
    <property type="evidence" value="ECO:0007669"/>
    <property type="project" value="InterPro"/>
</dbReference>
<dbReference type="GO" id="GO:0006412">
    <property type="term" value="P:translation"/>
    <property type="evidence" value="ECO:0007669"/>
    <property type="project" value="UniProtKB-UniRule"/>
</dbReference>
<dbReference type="Gene3D" id="2.20.28.120">
    <property type="entry name" value="Ribosomal protein L33"/>
    <property type="match status" value="1"/>
</dbReference>
<dbReference type="HAMAP" id="MF_00294">
    <property type="entry name" value="Ribosomal_bL33"/>
    <property type="match status" value="1"/>
</dbReference>
<dbReference type="InterPro" id="IPR001705">
    <property type="entry name" value="Ribosomal_bL33"/>
</dbReference>
<dbReference type="InterPro" id="IPR018264">
    <property type="entry name" value="Ribosomal_bL33_CS"/>
</dbReference>
<dbReference type="InterPro" id="IPR038584">
    <property type="entry name" value="Ribosomal_bL33_sf"/>
</dbReference>
<dbReference type="InterPro" id="IPR011332">
    <property type="entry name" value="Ribosomal_zn-bd"/>
</dbReference>
<dbReference type="NCBIfam" id="NF001764">
    <property type="entry name" value="PRK00504.1"/>
    <property type="match status" value="1"/>
</dbReference>
<dbReference type="NCBIfam" id="NF001860">
    <property type="entry name" value="PRK00595.1"/>
    <property type="match status" value="1"/>
</dbReference>
<dbReference type="NCBIfam" id="TIGR01023">
    <property type="entry name" value="rpmG_bact"/>
    <property type="match status" value="1"/>
</dbReference>
<dbReference type="PANTHER" id="PTHR43168">
    <property type="entry name" value="50S RIBOSOMAL PROTEIN L33, CHLOROPLASTIC"/>
    <property type="match status" value="1"/>
</dbReference>
<dbReference type="PANTHER" id="PTHR43168:SF2">
    <property type="entry name" value="LARGE RIBOSOMAL SUBUNIT PROTEIN BL33C"/>
    <property type="match status" value="1"/>
</dbReference>
<dbReference type="Pfam" id="PF00471">
    <property type="entry name" value="Ribosomal_L33"/>
    <property type="match status" value="1"/>
</dbReference>
<dbReference type="SUPFAM" id="SSF57829">
    <property type="entry name" value="Zn-binding ribosomal proteins"/>
    <property type="match status" value="1"/>
</dbReference>
<dbReference type="PROSITE" id="PS00582">
    <property type="entry name" value="RIBOSOMAL_L33"/>
    <property type="match status" value="1"/>
</dbReference>